<reference key="1">
    <citation type="journal article" date="2000" name="Biochem. J.">
        <title>pgaA and pgaB encode two constitutively expressed endopolygalacturonases of Aspergillus niger.</title>
        <authorList>
            <person name="Parenicova L."/>
            <person name="Benen J.A."/>
            <person name="Kester H.C."/>
            <person name="Visser J."/>
        </authorList>
    </citation>
    <scope>NUCLEOTIDE SEQUENCE [GENOMIC DNA]</scope>
    <scope>FUNCTION</scope>
    <scope>BIOPHYSICOCHEMICAL PROPERTIES</scope>
    <source>
        <strain>ATCC 9029 / NRRL 3 / CBS 120.49 / DSM 2466 / N400 / FGSC 732</strain>
    </source>
</reference>
<organism>
    <name type="scientific">Aspergillus niger</name>
    <dbReference type="NCBI Taxonomy" id="5061"/>
    <lineage>
        <taxon>Eukaryota</taxon>
        <taxon>Fungi</taxon>
        <taxon>Dikarya</taxon>
        <taxon>Ascomycota</taxon>
        <taxon>Pezizomycotina</taxon>
        <taxon>Eurotiomycetes</taxon>
        <taxon>Eurotiomycetidae</taxon>
        <taxon>Eurotiales</taxon>
        <taxon>Aspergillaceae</taxon>
        <taxon>Aspergillus</taxon>
        <taxon>Aspergillus subgen. Circumdati</taxon>
    </lineage>
</organism>
<proteinExistence type="evidence at protein level"/>
<comment type="function">
    <text evidence="4">Involved in maceration and soft-rotting of plant tissue. Hydrolyzes the 1,4-alpha glycosidic bonds of de-esterified pectate in the smooth region of the plant cell wall.</text>
</comment>
<comment type="catalytic activity">
    <reaction>
        <text>(1,4-alpha-D-galacturonosyl)n+m + H2O = (1,4-alpha-D-galacturonosyl)n + (1,4-alpha-D-galacturonosyl)m.</text>
        <dbReference type="EC" id="3.2.1.15"/>
    </reaction>
</comment>
<comment type="biophysicochemical properties">
    <phDependence>
        <text evidence="4">Optimum pH is 5.0.</text>
    </phDependence>
</comment>
<comment type="subcellular location">
    <subcellularLocation>
        <location evidence="5">Secreted</location>
    </subcellularLocation>
</comment>
<comment type="similarity">
    <text evidence="5">Belongs to the glycosyl hydrolase 28 family.</text>
</comment>
<sequence>MHFLQNAVVAATMGAALAAAAPLEKRSCTFTSASAAKSGKSSCSTITLDNIAVPAGETLDLTGLKKGTTVIFEGETTFGYKEWKGPLISMSGTDITVKQASGAKINCDGARWWDGKGSNGGKTKPKFFQAHKLDQSSITGLKVYNTPVQGFSILADHLTITDVTIDNSAGTSKGHNTDAFDIGQSTYITIDGATVYNQDDCLAINSGEHITFTNGYCDGGHGLSIGSIGGRSDNTVNDVTISNSKVLNSQNGVRIKTIYGKTGTVENVKFEDITLSDISKYGIVVEQDYENGSPTGTPTNGVKVEDITFKKVTGSVKSSGTDIYILCGSGSCSNWTWSGVDVTGGKKSSKCKNVPSGASCSD</sequence>
<feature type="signal peptide" evidence="2">
    <location>
        <begin position="1"/>
        <end position="20"/>
    </location>
</feature>
<feature type="propeptide" id="PRO_0000393653" evidence="2">
    <location>
        <begin position="21"/>
        <end position="25"/>
    </location>
</feature>
<feature type="chain" id="PRO_5000147351" description="Endopolygalacturonase B">
    <location>
        <begin position="26"/>
        <end position="362"/>
    </location>
</feature>
<feature type="repeat" description="PbH1 1">
    <location>
        <begin position="155"/>
        <end position="184"/>
    </location>
</feature>
<feature type="repeat" description="PbH1 2">
    <location>
        <begin position="185"/>
        <end position="206"/>
    </location>
</feature>
<feature type="repeat" description="PbH1 3">
    <location>
        <begin position="207"/>
        <end position="227"/>
    </location>
</feature>
<feature type="repeat" description="PbH1 4">
    <location>
        <begin position="236"/>
        <end position="257"/>
    </location>
</feature>
<feature type="repeat" description="PbH1 5">
    <location>
        <begin position="265"/>
        <end position="287"/>
    </location>
</feature>
<feature type="repeat" description="PbH1 6">
    <location>
        <begin position="299"/>
        <end position="344"/>
    </location>
</feature>
<feature type="active site" description="Proton donor" evidence="3">
    <location>
        <position position="199"/>
    </location>
</feature>
<feature type="active site" evidence="3">
    <location>
        <position position="221"/>
    </location>
</feature>
<feature type="glycosylation site" description="N-linked (GlcNAc...) asparagine" evidence="2">
    <location>
        <position position="334"/>
    </location>
</feature>
<feature type="disulfide bond" evidence="1">
    <location>
        <begin position="28"/>
        <end position="43"/>
    </location>
</feature>
<feature type="disulfide bond" evidence="1">
    <location>
        <begin position="201"/>
        <end position="217"/>
    </location>
</feature>
<feature type="disulfide bond" evidence="1">
    <location>
        <begin position="327"/>
        <end position="332"/>
    </location>
</feature>
<feature type="disulfide bond" evidence="1">
    <location>
        <begin position="351"/>
        <end position="360"/>
    </location>
</feature>
<evidence type="ECO:0000250" key="1"/>
<evidence type="ECO:0000255" key="2"/>
<evidence type="ECO:0000255" key="3">
    <source>
        <dbReference type="PROSITE-ProRule" id="PRU10052"/>
    </source>
</evidence>
<evidence type="ECO:0000269" key="4">
    <source>
    </source>
</evidence>
<evidence type="ECO:0000305" key="5"/>
<dbReference type="EC" id="3.2.1.15"/>
<dbReference type="EMBL" id="Y18805">
    <property type="protein sequence ID" value="CAB72126.1"/>
    <property type="molecule type" value="Genomic_DNA"/>
</dbReference>
<dbReference type="RefSeq" id="XP_001399628.1">
    <property type="nucleotide sequence ID" value="XM_001399591.3"/>
</dbReference>
<dbReference type="SMR" id="Q9P4W3"/>
<dbReference type="CAZy" id="GH28">
    <property type="family name" value="Glycoside Hydrolase Family 28"/>
</dbReference>
<dbReference type="GlyCosmos" id="Q9P4W3">
    <property type="glycosylation" value="1 site, No reported glycans"/>
</dbReference>
<dbReference type="PaxDb" id="5061-CADANGAP00001948"/>
<dbReference type="EnsemblFungi" id="CAK47667">
    <property type="protein sequence ID" value="CAK47667"/>
    <property type="gene ID" value="An02g04900"/>
</dbReference>
<dbReference type="GeneID" id="4978979"/>
<dbReference type="KEGG" id="ang:An02g04900"/>
<dbReference type="VEuPathDB" id="FungiDB:An02g04900"/>
<dbReference type="VEuPathDB" id="FungiDB:ASPNIDRAFT2_1165009"/>
<dbReference type="VEuPathDB" id="FungiDB:ATCC64974_58540"/>
<dbReference type="VEuPathDB" id="FungiDB:M747DRAFT_292111"/>
<dbReference type="eggNOG" id="ENOG502QTAW">
    <property type="taxonomic scope" value="Eukaryota"/>
</dbReference>
<dbReference type="OrthoDB" id="1546079at2759"/>
<dbReference type="GO" id="GO:0005576">
    <property type="term" value="C:extracellular region"/>
    <property type="evidence" value="ECO:0007669"/>
    <property type="project" value="UniProtKB-SubCell"/>
</dbReference>
<dbReference type="GO" id="GO:0004650">
    <property type="term" value="F:polygalacturonase activity"/>
    <property type="evidence" value="ECO:0007669"/>
    <property type="project" value="UniProtKB-EC"/>
</dbReference>
<dbReference type="GO" id="GO:0071555">
    <property type="term" value="P:cell wall organization"/>
    <property type="evidence" value="ECO:0007669"/>
    <property type="project" value="UniProtKB-KW"/>
</dbReference>
<dbReference type="GO" id="GO:0045490">
    <property type="term" value="P:pectin catabolic process"/>
    <property type="evidence" value="ECO:0007669"/>
    <property type="project" value="UniProtKB-ARBA"/>
</dbReference>
<dbReference type="FunFam" id="2.160.20.10:FF:000002">
    <property type="entry name" value="Endopolygalacturonase D"/>
    <property type="match status" value="1"/>
</dbReference>
<dbReference type="Gene3D" id="2.160.20.10">
    <property type="entry name" value="Single-stranded right-handed beta-helix, Pectin lyase-like"/>
    <property type="match status" value="1"/>
</dbReference>
<dbReference type="InterPro" id="IPR000743">
    <property type="entry name" value="Glyco_hydro_28"/>
</dbReference>
<dbReference type="InterPro" id="IPR050434">
    <property type="entry name" value="Glycosyl_hydrlase_28"/>
</dbReference>
<dbReference type="InterPro" id="IPR006626">
    <property type="entry name" value="PbH1"/>
</dbReference>
<dbReference type="InterPro" id="IPR012334">
    <property type="entry name" value="Pectin_lyas_fold"/>
</dbReference>
<dbReference type="InterPro" id="IPR011050">
    <property type="entry name" value="Pectin_lyase_fold/virulence"/>
</dbReference>
<dbReference type="PANTHER" id="PTHR31884:SF13">
    <property type="entry name" value="ENDOPOLYGALACTURONASE B"/>
    <property type="match status" value="1"/>
</dbReference>
<dbReference type="PANTHER" id="PTHR31884">
    <property type="entry name" value="POLYGALACTURONASE"/>
    <property type="match status" value="1"/>
</dbReference>
<dbReference type="Pfam" id="PF00295">
    <property type="entry name" value="Glyco_hydro_28"/>
    <property type="match status" value="1"/>
</dbReference>
<dbReference type="SMART" id="SM00710">
    <property type="entry name" value="PbH1"/>
    <property type="match status" value="6"/>
</dbReference>
<dbReference type="SUPFAM" id="SSF51126">
    <property type="entry name" value="Pectin lyase-like"/>
    <property type="match status" value="1"/>
</dbReference>
<dbReference type="PROSITE" id="PS00502">
    <property type="entry name" value="POLYGALACTURONASE"/>
    <property type="match status" value="1"/>
</dbReference>
<gene>
    <name type="primary">pgaB</name>
    <name type="synonym">pecB</name>
</gene>
<name>PGLRB_ASPNG</name>
<protein>
    <recommendedName>
        <fullName>Endopolygalacturonase B</fullName>
        <ecNumber>3.2.1.15</ecNumber>
    </recommendedName>
    <alternativeName>
        <fullName>Pectinase B</fullName>
    </alternativeName>
    <alternativeName>
        <fullName>Polygalacturonase B</fullName>
    </alternativeName>
</protein>
<keyword id="KW-0961">Cell wall biogenesis/degradation</keyword>
<keyword id="KW-1015">Disulfide bond</keyword>
<keyword id="KW-0325">Glycoprotein</keyword>
<keyword id="KW-0326">Glycosidase</keyword>
<keyword id="KW-0378">Hydrolase</keyword>
<keyword id="KW-0677">Repeat</keyword>
<keyword id="KW-0964">Secreted</keyword>
<keyword id="KW-0732">Signal</keyword>
<keyword id="KW-0865">Zymogen</keyword>
<accession>Q9P4W3</accession>